<protein>
    <recommendedName>
        <fullName evidence="1">Prefoldin subunit beta</fullName>
    </recommendedName>
    <alternativeName>
        <fullName evidence="1">GimC subunit beta</fullName>
    </alternativeName>
</protein>
<proteinExistence type="inferred from homology"/>
<gene>
    <name evidence="1" type="primary">pfdB</name>
    <name type="ordered locus">Maeo_0175</name>
</gene>
<feature type="chain" id="PRO_1000022791" description="Prefoldin subunit beta">
    <location>
        <begin position="1"/>
        <end position="115"/>
    </location>
</feature>
<dbReference type="EMBL" id="CP000743">
    <property type="protein sequence ID" value="ABR55767.1"/>
    <property type="molecule type" value="Genomic_DNA"/>
</dbReference>
<dbReference type="RefSeq" id="WP_011972899.1">
    <property type="nucleotide sequence ID" value="NC_009635.1"/>
</dbReference>
<dbReference type="SMR" id="A6UTE5"/>
<dbReference type="STRING" id="419665.Maeo_0175"/>
<dbReference type="GeneID" id="5327595"/>
<dbReference type="KEGG" id="mae:Maeo_0175"/>
<dbReference type="eggNOG" id="arCOG01342">
    <property type="taxonomic scope" value="Archaea"/>
</dbReference>
<dbReference type="HOGENOM" id="CLU_131909_0_1_2"/>
<dbReference type="OrthoDB" id="60701at2157"/>
<dbReference type="Proteomes" id="UP000001106">
    <property type="component" value="Chromosome"/>
</dbReference>
<dbReference type="GO" id="GO:0005737">
    <property type="term" value="C:cytoplasm"/>
    <property type="evidence" value="ECO:0007669"/>
    <property type="project" value="UniProtKB-SubCell"/>
</dbReference>
<dbReference type="GO" id="GO:0016272">
    <property type="term" value="C:prefoldin complex"/>
    <property type="evidence" value="ECO:0007669"/>
    <property type="project" value="UniProtKB-UniRule"/>
</dbReference>
<dbReference type="GO" id="GO:0051082">
    <property type="term" value="F:unfolded protein binding"/>
    <property type="evidence" value="ECO:0007669"/>
    <property type="project" value="UniProtKB-UniRule"/>
</dbReference>
<dbReference type="GO" id="GO:0006457">
    <property type="term" value="P:protein folding"/>
    <property type="evidence" value="ECO:0007669"/>
    <property type="project" value="UniProtKB-UniRule"/>
</dbReference>
<dbReference type="Gene3D" id="1.10.287.370">
    <property type="match status" value="1"/>
</dbReference>
<dbReference type="HAMAP" id="MF_00307">
    <property type="entry name" value="PfdB"/>
    <property type="match status" value="1"/>
</dbReference>
<dbReference type="InterPro" id="IPR002777">
    <property type="entry name" value="PFD_beta-like"/>
</dbReference>
<dbReference type="InterPro" id="IPR012713">
    <property type="entry name" value="PfdB"/>
</dbReference>
<dbReference type="InterPro" id="IPR009053">
    <property type="entry name" value="Prefoldin"/>
</dbReference>
<dbReference type="NCBIfam" id="TIGR02338">
    <property type="entry name" value="gimC_beta"/>
    <property type="match status" value="1"/>
</dbReference>
<dbReference type="Pfam" id="PF01920">
    <property type="entry name" value="Prefoldin_2"/>
    <property type="match status" value="1"/>
</dbReference>
<dbReference type="SUPFAM" id="SSF46579">
    <property type="entry name" value="Prefoldin"/>
    <property type="match status" value="1"/>
</dbReference>
<organism>
    <name type="scientific">Methanococcus aeolicus (strain ATCC BAA-1280 / DSM 17508 / OCM 812 / Nankai-3)</name>
    <dbReference type="NCBI Taxonomy" id="419665"/>
    <lineage>
        <taxon>Archaea</taxon>
        <taxon>Methanobacteriati</taxon>
        <taxon>Methanobacteriota</taxon>
        <taxon>Methanomada group</taxon>
        <taxon>Methanococci</taxon>
        <taxon>Methanococcales</taxon>
        <taxon>Methanococcaceae</taxon>
        <taxon>Methanococcus</taxon>
    </lineage>
</organism>
<accession>A6UTE5</accession>
<keyword id="KW-0143">Chaperone</keyword>
<keyword id="KW-0963">Cytoplasm</keyword>
<reference key="1">
    <citation type="submission" date="2007-06" db="EMBL/GenBank/DDBJ databases">
        <title>Complete sequence of Methanococcus aeolicus Nankai-3.</title>
        <authorList>
            <consortium name="US DOE Joint Genome Institute"/>
            <person name="Copeland A."/>
            <person name="Lucas S."/>
            <person name="Lapidus A."/>
            <person name="Barry K."/>
            <person name="Glavina del Rio T."/>
            <person name="Dalin E."/>
            <person name="Tice H."/>
            <person name="Pitluck S."/>
            <person name="Chain P."/>
            <person name="Malfatti S."/>
            <person name="Shin M."/>
            <person name="Vergez L."/>
            <person name="Schmutz J."/>
            <person name="Larimer F."/>
            <person name="Land M."/>
            <person name="Hauser L."/>
            <person name="Kyrpides N."/>
            <person name="Lykidis A."/>
            <person name="Sieprawska-Lupa M."/>
            <person name="Whitman W.B."/>
            <person name="Richardson P."/>
        </authorList>
    </citation>
    <scope>NUCLEOTIDE SEQUENCE [LARGE SCALE GENOMIC DNA]</scope>
    <source>
        <strain>ATCC BAA-1280 / DSM 17508 / OCM 812 / Nankai-3</strain>
    </source>
</reference>
<comment type="function">
    <text evidence="1">Molecular chaperone capable of stabilizing a range of proteins. Seems to fulfill an ATP-independent, HSP70-like function in archaeal de novo protein folding.</text>
</comment>
<comment type="subunit">
    <text evidence="1">Heterohexamer of two alpha and four beta subunits.</text>
</comment>
<comment type="subcellular location">
    <subcellularLocation>
        <location evidence="1">Cytoplasm</location>
    </subcellularLocation>
</comment>
<comment type="similarity">
    <text evidence="1">Belongs to the prefoldin subunit beta family.</text>
</comment>
<sequence>MDMPANIQNQLMQFQQLQQQLQTIVMQKQQLEAQIKEMEKAMEEMEKSEDSTVYKMAGGILVSRNKEDVKEELSEKVETYKVRITTFAKQEEKMQKRLTDMQESLQKALQGTNIA</sequence>
<evidence type="ECO:0000255" key="1">
    <source>
        <dbReference type="HAMAP-Rule" id="MF_00307"/>
    </source>
</evidence>
<name>PFDB_META3</name>